<gene>
    <name evidence="1" type="primary">iscS</name>
    <name type="ordered locus">VC0395_A0277</name>
    <name type="ordered locus">VC395_0765</name>
</gene>
<reference key="1">
    <citation type="submission" date="2007-03" db="EMBL/GenBank/DDBJ databases">
        <authorList>
            <person name="Heidelberg J."/>
        </authorList>
    </citation>
    <scope>NUCLEOTIDE SEQUENCE [LARGE SCALE GENOMIC DNA]</scope>
    <source>
        <strain>ATCC 39541 / Classical Ogawa 395 / O395</strain>
    </source>
</reference>
<reference key="2">
    <citation type="journal article" date="2008" name="PLoS ONE">
        <title>A recalibrated molecular clock and independent origins for the cholera pandemic clones.</title>
        <authorList>
            <person name="Feng L."/>
            <person name="Reeves P.R."/>
            <person name="Lan R."/>
            <person name="Ren Y."/>
            <person name="Gao C."/>
            <person name="Zhou Z."/>
            <person name="Ren Y."/>
            <person name="Cheng J."/>
            <person name="Wang W."/>
            <person name="Wang J."/>
            <person name="Qian W."/>
            <person name="Li D."/>
            <person name="Wang L."/>
        </authorList>
    </citation>
    <scope>NUCLEOTIDE SEQUENCE [LARGE SCALE GENOMIC DNA]</scope>
    <source>
        <strain>ATCC 39541 / Classical Ogawa 395 / O395</strain>
    </source>
</reference>
<protein>
    <recommendedName>
        <fullName evidence="1">Cysteine desulfurase IscS</fullName>
        <ecNumber evidence="1">2.8.1.7</ecNumber>
    </recommendedName>
</protein>
<organism>
    <name type="scientific">Vibrio cholerae serotype O1 (strain ATCC 39541 / Classical Ogawa 395 / O395)</name>
    <dbReference type="NCBI Taxonomy" id="345073"/>
    <lineage>
        <taxon>Bacteria</taxon>
        <taxon>Pseudomonadati</taxon>
        <taxon>Pseudomonadota</taxon>
        <taxon>Gammaproteobacteria</taxon>
        <taxon>Vibrionales</taxon>
        <taxon>Vibrionaceae</taxon>
        <taxon>Vibrio</taxon>
    </lineage>
</organism>
<dbReference type="EC" id="2.8.1.7" evidence="1"/>
<dbReference type="EMBL" id="CP000627">
    <property type="protein sequence ID" value="ABQ20476.1"/>
    <property type="molecule type" value="Genomic_DNA"/>
</dbReference>
<dbReference type="EMBL" id="CP001235">
    <property type="protein sequence ID" value="ACP08782.1"/>
    <property type="molecule type" value="Genomic_DNA"/>
</dbReference>
<dbReference type="RefSeq" id="WP_000775253.1">
    <property type="nucleotide sequence ID" value="NZ_JAACZH010000017.1"/>
</dbReference>
<dbReference type="SMR" id="A5F3G4"/>
<dbReference type="KEGG" id="vco:VC0395_A0277"/>
<dbReference type="KEGG" id="vcr:VC395_0765"/>
<dbReference type="PATRIC" id="fig|345073.21.peg.739"/>
<dbReference type="eggNOG" id="COG1104">
    <property type="taxonomic scope" value="Bacteria"/>
</dbReference>
<dbReference type="HOGENOM" id="CLU_003433_0_2_6"/>
<dbReference type="OrthoDB" id="9808002at2"/>
<dbReference type="UniPathway" id="UPA00266"/>
<dbReference type="Proteomes" id="UP000000249">
    <property type="component" value="Chromosome 2"/>
</dbReference>
<dbReference type="GO" id="GO:1990221">
    <property type="term" value="C:L-cysteine desulfurase complex"/>
    <property type="evidence" value="ECO:0007669"/>
    <property type="project" value="UniProtKB-ARBA"/>
</dbReference>
<dbReference type="GO" id="GO:0051537">
    <property type="term" value="F:2 iron, 2 sulfur cluster binding"/>
    <property type="evidence" value="ECO:0007669"/>
    <property type="project" value="UniProtKB-UniRule"/>
</dbReference>
<dbReference type="GO" id="GO:0031071">
    <property type="term" value="F:cysteine desulfurase activity"/>
    <property type="evidence" value="ECO:0007669"/>
    <property type="project" value="UniProtKB-UniRule"/>
</dbReference>
<dbReference type="GO" id="GO:0046872">
    <property type="term" value="F:metal ion binding"/>
    <property type="evidence" value="ECO:0007669"/>
    <property type="project" value="UniProtKB-KW"/>
</dbReference>
<dbReference type="GO" id="GO:0030170">
    <property type="term" value="F:pyridoxal phosphate binding"/>
    <property type="evidence" value="ECO:0007669"/>
    <property type="project" value="UniProtKB-UniRule"/>
</dbReference>
<dbReference type="GO" id="GO:0044571">
    <property type="term" value="P:[2Fe-2S] cluster assembly"/>
    <property type="evidence" value="ECO:0007669"/>
    <property type="project" value="UniProtKB-UniRule"/>
</dbReference>
<dbReference type="FunFam" id="3.40.640.10:FF:000003">
    <property type="entry name" value="Cysteine desulfurase IscS"/>
    <property type="match status" value="1"/>
</dbReference>
<dbReference type="FunFam" id="3.90.1150.10:FF:000002">
    <property type="entry name" value="Cysteine desulfurase IscS"/>
    <property type="match status" value="1"/>
</dbReference>
<dbReference type="Gene3D" id="3.90.1150.10">
    <property type="entry name" value="Aspartate Aminotransferase, domain 1"/>
    <property type="match status" value="1"/>
</dbReference>
<dbReference type="Gene3D" id="3.40.640.10">
    <property type="entry name" value="Type I PLP-dependent aspartate aminotransferase-like (Major domain)"/>
    <property type="match status" value="1"/>
</dbReference>
<dbReference type="HAMAP" id="MF_00331">
    <property type="entry name" value="Cys_desulf_IscS"/>
    <property type="match status" value="1"/>
</dbReference>
<dbReference type="InterPro" id="IPR000192">
    <property type="entry name" value="Aminotrans_V_dom"/>
</dbReference>
<dbReference type="InterPro" id="IPR020578">
    <property type="entry name" value="Aminotrans_V_PyrdxlP_BS"/>
</dbReference>
<dbReference type="InterPro" id="IPR010240">
    <property type="entry name" value="Cys_deSase_IscS"/>
</dbReference>
<dbReference type="InterPro" id="IPR016454">
    <property type="entry name" value="Cysteine_dSase"/>
</dbReference>
<dbReference type="InterPro" id="IPR015424">
    <property type="entry name" value="PyrdxlP-dep_Trfase"/>
</dbReference>
<dbReference type="InterPro" id="IPR015421">
    <property type="entry name" value="PyrdxlP-dep_Trfase_major"/>
</dbReference>
<dbReference type="InterPro" id="IPR015422">
    <property type="entry name" value="PyrdxlP-dep_Trfase_small"/>
</dbReference>
<dbReference type="NCBIfam" id="TIGR02006">
    <property type="entry name" value="IscS"/>
    <property type="match status" value="1"/>
</dbReference>
<dbReference type="NCBIfam" id="NF002806">
    <property type="entry name" value="PRK02948.1"/>
    <property type="match status" value="1"/>
</dbReference>
<dbReference type="NCBIfam" id="NF010611">
    <property type="entry name" value="PRK14012.1"/>
    <property type="match status" value="1"/>
</dbReference>
<dbReference type="PANTHER" id="PTHR11601:SF34">
    <property type="entry name" value="CYSTEINE DESULFURASE"/>
    <property type="match status" value="1"/>
</dbReference>
<dbReference type="PANTHER" id="PTHR11601">
    <property type="entry name" value="CYSTEINE DESULFURYLASE FAMILY MEMBER"/>
    <property type="match status" value="1"/>
</dbReference>
<dbReference type="Pfam" id="PF00266">
    <property type="entry name" value="Aminotran_5"/>
    <property type="match status" value="1"/>
</dbReference>
<dbReference type="PIRSF" id="PIRSF005572">
    <property type="entry name" value="NifS"/>
    <property type="match status" value="1"/>
</dbReference>
<dbReference type="SUPFAM" id="SSF53383">
    <property type="entry name" value="PLP-dependent transferases"/>
    <property type="match status" value="1"/>
</dbReference>
<dbReference type="PROSITE" id="PS00595">
    <property type="entry name" value="AA_TRANSFER_CLASS_5"/>
    <property type="match status" value="1"/>
</dbReference>
<feature type="chain" id="PRO_1000072030" description="Cysteine desulfurase IscS">
    <location>
        <begin position="1"/>
        <end position="404"/>
    </location>
</feature>
<feature type="active site" description="Cysteine persulfide intermediate" evidence="1">
    <location>
        <position position="328"/>
    </location>
</feature>
<feature type="binding site" evidence="1">
    <location>
        <begin position="75"/>
        <end position="76"/>
    </location>
    <ligand>
        <name>pyridoxal 5'-phosphate</name>
        <dbReference type="ChEBI" id="CHEBI:597326"/>
    </ligand>
</feature>
<feature type="binding site" evidence="1">
    <location>
        <position position="155"/>
    </location>
    <ligand>
        <name>pyridoxal 5'-phosphate</name>
        <dbReference type="ChEBI" id="CHEBI:597326"/>
    </ligand>
</feature>
<feature type="binding site" evidence="1">
    <location>
        <position position="183"/>
    </location>
    <ligand>
        <name>pyridoxal 5'-phosphate</name>
        <dbReference type="ChEBI" id="CHEBI:597326"/>
    </ligand>
</feature>
<feature type="binding site" evidence="1">
    <location>
        <begin position="203"/>
        <end position="205"/>
    </location>
    <ligand>
        <name>pyridoxal 5'-phosphate</name>
        <dbReference type="ChEBI" id="CHEBI:597326"/>
    </ligand>
</feature>
<feature type="binding site" evidence="1">
    <location>
        <position position="243"/>
    </location>
    <ligand>
        <name>pyridoxal 5'-phosphate</name>
        <dbReference type="ChEBI" id="CHEBI:597326"/>
    </ligand>
</feature>
<feature type="binding site" description="via persulfide group" evidence="1">
    <location>
        <position position="328"/>
    </location>
    <ligand>
        <name>[2Fe-2S] cluster</name>
        <dbReference type="ChEBI" id="CHEBI:190135"/>
        <note>ligand shared with IscU</note>
    </ligand>
</feature>
<feature type="modified residue" description="N6-(pyridoxal phosphate)lysine" evidence="1">
    <location>
        <position position="206"/>
    </location>
</feature>
<keyword id="KW-0001">2Fe-2S</keyword>
<keyword id="KW-0963">Cytoplasm</keyword>
<keyword id="KW-0408">Iron</keyword>
<keyword id="KW-0411">Iron-sulfur</keyword>
<keyword id="KW-0479">Metal-binding</keyword>
<keyword id="KW-0663">Pyridoxal phosphate</keyword>
<keyword id="KW-0808">Transferase</keyword>
<name>ISCS_VIBC3</name>
<sequence length="404" mass="44809">MKLPIYLDYSATCPVDPRVAEKMVQYMTMDGTFGNPASRSHRYGWQAEEAVDTAREQIAALLNADPREIVFTSGATESDNLAIKGVAHFYNKQGKHIITSKTEHKAVLDTMRQLEREGFEVTYLDPESNGLVDLAKLEAAMRDDTILVSIMHVNNEIGVVQDIAAIGELCRSRKVVFHVDAAQSAGKVAIDVQEMKVDLISLSAHKAYGPKGIGALYVRRKPRIRLEAQMHGGGHERGFRSGTLPTHQIVGMGEAFRIAKEELQQDYDHALKLRNRLLDGIKDMEAVTINGDLDQRVPHNLNVSFAFVEGESLLMALKDLAVSSGSACTSASLEPSYVLRALGLNDELAHSSIRFSFGRFTTEAEIDYAIELIRVAVDKLRAMSPLWDMYKDGVDLNTVEWAHH</sequence>
<comment type="function">
    <text evidence="1">Master enzyme that delivers sulfur to a number of partners involved in Fe-S cluster assembly, tRNA modification or cofactor biosynthesis. Catalyzes the removal of elemental sulfur atoms from cysteine to produce alanine. Functions as a sulfur delivery protein for Fe-S cluster synthesis onto IscU, an Fe-S scaffold assembly protein, as well as other S acceptor proteins.</text>
</comment>
<comment type="catalytic activity">
    <reaction evidence="1">
        <text>(sulfur carrier)-H + L-cysteine = (sulfur carrier)-SH + L-alanine</text>
        <dbReference type="Rhea" id="RHEA:43892"/>
        <dbReference type="Rhea" id="RHEA-COMP:14737"/>
        <dbReference type="Rhea" id="RHEA-COMP:14739"/>
        <dbReference type="ChEBI" id="CHEBI:29917"/>
        <dbReference type="ChEBI" id="CHEBI:35235"/>
        <dbReference type="ChEBI" id="CHEBI:57972"/>
        <dbReference type="ChEBI" id="CHEBI:64428"/>
        <dbReference type="EC" id="2.8.1.7"/>
    </reaction>
</comment>
<comment type="cofactor">
    <cofactor evidence="1">
        <name>pyridoxal 5'-phosphate</name>
        <dbReference type="ChEBI" id="CHEBI:597326"/>
    </cofactor>
</comment>
<comment type="pathway">
    <text evidence="1">Cofactor biosynthesis; iron-sulfur cluster biosynthesis.</text>
</comment>
<comment type="subunit">
    <text evidence="1">Homodimer. Forms a heterotetramer with IscU, interacts with other sulfur acceptors.</text>
</comment>
<comment type="subcellular location">
    <subcellularLocation>
        <location evidence="1">Cytoplasm</location>
    </subcellularLocation>
</comment>
<comment type="similarity">
    <text evidence="1">Belongs to the class-V pyridoxal-phosphate-dependent aminotransferase family. NifS/IscS subfamily.</text>
</comment>
<evidence type="ECO:0000255" key="1">
    <source>
        <dbReference type="HAMAP-Rule" id="MF_00331"/>
    </source>
</evidence>
<accession>A5F3G4</accession>
<accession>C3LY58</accession>
<proteinExistence type="inferred from homology"/>